<proteinExistence type="evidence at transcript level"/>
<sequence>MTKDEDFKLLKIQTFSLRVNIHCEGCNKKVKKLLQRIEGVCHVKIEAEHQKVTVSGSVDSATLINKLVKAGKHAELWSPNPNQNQPQKPKTNDFIKNVNQKGQKQGSAKSGIEACKPKNGPKGAAFVAEEDGDGSEEEDGDVQFPKPANQQQQQNVVNAKKNSGGAAMNNGNNGVNAASKKVNQKQSNHNQNTQQVMAAMRMRTAGKMSTGVEANEIGALMGLAGFNGATNAVNHPPNGIQQQLQAPPLNNVNGVTNHNLTNSNGGMMMNMNGYNNHHPMNMQSRQMMHQPQQMMYQRSSFVPASSNGYYYNYTPSPYSYYPYYPYASDQYQQQSSHSHATNMSSEEDAGNNNSCNIM</sequence>
<reference key="1">
    <citation type="journal article" date="2000" name="Nature">
        <title>Sequence and analysis of chromosome 1 of the plant Arabidopsis thaliana.</title>
        <authorList>
            <person name="Theologis A."/>
            <person name="Ecker J.R."/>
            <person name="Palm C.J."/>
            <person name="Federspiel N.A."/>
            <person name="Kaul S."/>
            <person name="White O."/>
            <person name="Alonso J."/>
            <person name="Altafi H."/>
            <person name="Araujo R."/>
            <person name="Bowman C.L."/>
            <person name="Brooks S.Y."/>
            <person name="Buehler E."/>
            <person name="Chan A."/>
            <person name="Chao Q."/>
            <person name="Chen H."/>
            <person name="Cheuk R.F."/>
            <person name="Chin C.W."/>
            <person name="Chung M.K."/>
            <person name="Conn L."/>
            <person name="Conway A.B."/>
            <person name="Conway A.R."/>
            <person name="Creasy T.H."/>
            <person name="Dewar K."/>
            <person name="Dunn P."/>
            <person name="Etgu P."/>
            <person name="Feldblyum T.V."/>
            <person name="Feng J.-D."/>
            <person name="Fong B."/>
            <person name="Fujii C.Y."/>
            <person name="Gill J.E."/>
            <person name="Goldsmith A.D."/>
            <person name="Haas B."/>
            <person name="Hansen N.F."/>
            <person name="Hughes B."/>
            <person name="Huizar L."/>
            <person name="Hunter J.L."/>
            <person name="Jenkins J."/>
            <person name="Johnson-Hopson C."/>
            <person name="Khan S."/>
            <person name="Khaykin E."/>
            <person name="Kim C.J."/>
            <person name="Koo H.L."/>
            <person name="Kremenetskaia I."/>
            <person name="Kurtz D.B."/>
            <person name="Kwan A."/>
            <person name="Lam B."/>
            <person name="Langin-Hooper S."/>
            <person name="Lee A."/>
            <person name="Lee J.M."/>
            <person name="Lenz C.A."/>
            <person name="Li J.H."/>
            <person name="Li Y.-P."/>
            <person name="Lin X."/>
            <person name="Liu S.X."/>
            <person name="Liu Z.A."/>
            <person name="Luros J.S."/>
            <person name="Maiti R."/>
            <person name="Marziali A."/>
            <person name="Militscher J."/>
            <person name="Miranda M."/>
            <person name="Nguyen M."/>
            <person name="Nierman W.C."/>
            <person name="Osborne B.I."/>
            <person name="Pai G."/>
            <person name="Peterson J."/>
            <person name="Pham P.K."/>
            <person name="Rizzo M."/>
            <person name="Rooney T."/>
            <person name="Rowley D."/>
            <person name="Sakano H."/>
            <person name="Salzberg S.L."/>
            <person name="Schwartz J.R."/>
            <person name="Shinn P."/>
            <person name="Southwick A.M."/>
            <person name="Sun H."/>
            <person name="Tallon L.J."/>
            <person name="Tambunga G."/>
            <person name="Toriumi M.J."/>
            <person name="Town C.D."/>
            <person name="Utterback T."/>
            <person name="Van Aken S."/>
            <person name="Vaysberg M."/>
            <person name="Vysotskaia V.S."/>
            <person name="Walker M."/>
            <person name="Wu D."/>
            <person name="Yu G."/>
            <person name="Fraser C.M."/>
            <person name="Venter J.C."/>
            <person name="Davis R.W."/>
        </authorList>
    </citation>
    <scope>NUCLEOTIDE SEQUENCE [LARGE SCALE GENOMIC DNA]</scope>
    <source>
        <strain>cv. Columbia</strain>
    </source>
</reference>
<reference key="2">
    <citation type="journal article" date="2017" name="Plant J.">
        <title>Araport11: a complete reannotation of the Arabidopsis thaliana reference genome.</title>
        <authorList>
            <person name="Cheng C.Y."/>
            <person name="Krishnakumar V."/>
            <person name="Chan A.P."/>
            <person name="Thibaud-Nissen F."/>
            <person name="Schobel S."/>
            <person name="Town C.D."/>
        </authorList>
    </citation>
    <scope>GENOME REANNOTATION</scope>
    <source>
        <strain>cv. Columbia</strain>
    </source>
</reference>
<reference key="3">
    <citation type="submission" date="2007-01" db="EMBL/GenBank/DDBJ databases">
        <title>Arabidopsis ORF clones.</title>
        <authorList>
            <person name="Bautista V.R."/>
            <person name="Kim C.J."/>
            <person name="Chen H."/>
            <person name="Wu S.Y."/>
            <person name="De Los Reyes C."/>
            <person name="Ecker J.R."/>
        </authorList>
    </citation>
    <scope>NUCLEOTIDE SEQUENCE [LARGE SCALE MRNA]</scope>
    <source>
        <strain>cv. Columbia</strain>
    </source>
</reference>
<reference key="4">
    <citation type="journal article" date="2002" name="Science">
        <title>Functional annotation of a full-length Arabidopsis cDNA collection.</title>
        <authorList>
            <person name="Seki M."/>
            <person name="Narusaka M."/>
            <person name="Kamiya A."/>
            <person name="Ishida J."/>
            <person name="Satou M."/>
            <person name="Sakurai T."/>
            <person name="Nakajima M."/>
            <person name="Enju A."/>
            <person name="Akiyama K."/>
            <person name="Oono Y."/>
            <person name="Muramatsu M."/>
            <person name="Hayashizaki Y."/>
            <person name="Kawai J."/>
            <person name="Carninci P."/>
            <person name="Itoh M."/>
            <person name="Ishii Y."/>
            <person name="Arakawa T."/>
            <person name="Shibata K."/>
            <person name="Shinagawa A."/>
            <person name="Shinozaki K."/>
        </authorList>
    </citation>
    <scope>NUCLEOTIDE SEQUENCE [LARGE SCALE MRNA] OF 8-358</scope>
    <source>
        <strain>cv. Columbia</strain>
    </source>
</reference>
<reference key="5">
    <citation type="journal article" date="2010" name="Metallomics">
        <title>Metallochaperone-like genes in Arabidopsis thaliana.</title>
        <authorList>
            <person name="Tehseen M."/>
            <person name="Cairns N."/>
            <person name="Sherson S."/>
            <person name="Cobbett C.S."/>
        </authorList>
    </citation>
    <scope>GENE FAMILY</scope>
    <scope>NOMENCLATURE</scope>
</reference>
<reference key="6">
    <citation type="journal article" date="2013" name="FEBS J.">
        <title>Heavy metal-associated isoprenylated plant protein (HIPP): characterization of a family of proteins exclusive to plants.</title>
        <authorList>
            <person name="de Abreu-Neto J.B."/>
            <person name="Turchetto-Zolet A.C."/>
            <person name="de Oliveira L.F."/>
            <person name="Zanettini M.H."/>
            <person name="Margis-Pinheiro M."/>
        </authorList>
    </citation>
    <scope>GENE FAMILY</scope>
    <scope>NOMENCLATURE</scope>
</reference>
<organism evidence="10">
    <name type="scientific">Arabidopsis thaliana</name>
    <name type="common">Mouse-ear cress</name>
    <dbReference type="NCBI Taxonomy" id="3702"/>
    <lineage>
        <taxon>Eukaryota</taxon>
        <taxon>Viridiplantae</taxon>
        <taxon>Streptophyta</taxon>
        <taxon>Embryophyta</taxon>
        <taxon>Tracheophyta</taxon>
        <taxon>Spermatophyta</taxon>
        <taxon>Magnoliopsida</taxon>
        <taxon>eudicotyledons</taxon>
        <taxon>Gunneridae</taxon>
        <taxon>Pentapetalae</taxon>
        <taxon>rosids</taxon>
        <taxon>malvids</taxon>
        <taxon>Brassicales</taxon>
        <taxon>Brassicaceae</taxon>
        <taxon>Camelineae</taxon>
        <taxon>Arabidopsis</taxon>
    </lineage>
</organism>
<dbReference type="EMBL" id="AF000657">
    <property type="protein sequence ID" value="AAB72166.1"/>
    <property type="status" value="ALT_SEQ"/>
    <property type="molecule type" value="Genomic_DNA"/>
</dbReference>
<dbReference type="EMBL" id="CP002684">
    <property type="protein sequence ID" value="AEE30320.1"/>
    <property type="molecule type" value="Genomic_DNA"/>
</dbReference>
<dbReference type="EMBL" id="BT030019">
    <property type="protein sequence ID" value="ABN04757.1"/>
    <property type="molecule type" value="mRNA"/>
</dbReference>
<dbReference type="EMBL" id="AK117674">
    <property type="protein sequence ID" value="BAC42327.1"/>
    <property type="status" value="ALT_INIT"/>
    <property type="molecule type" value="mRNA"/>
</dbReference>
<dbReference type="PIR" id="A86364">
    <property type="entry name" value="A86364"/>
</dbReference>
<dbReference type="RefSeq" id="NP_173713.1">
    <property type="nucleotide sequence ID" value="NM_102148.4"/>
</dbReference>
<dbReference type="SMR" id="A2RVM8"/>
<dbReference type="FunCoup" id="A2RVM8">
    <property type="interactions" value="111"/>
</dbReference>
<dbReference type="STRING" id="3702.A2RVM8"/>
<dbReference type="PaxDb" id="3702-AT1G23000.1"/>
<dbReference type="EnsemblPlants" id="AT1G23000.1">
    <property type="protein sequence ID" value="AT1G23000.1"/>
    <property type="gene ID" value="AT1G23000"/>
</dbReference>
<dbReference type="GeneID" id="838908"/>
<dbReference type="Gramene" id="AT1G23000.1">
    <property type="protein sequence ID" value="AT1G23000.1"/>
    <property type="gene ID" value="AT1G23000"/>
</dbReference>
<dbReference type="KEGG" id="ath:AT1G23000"/>
<dbReference type="Araport" id="AT1G23000"/>
<dbReference type="TAIR" id="AT1G23000"/>
<dbReference type="eggNOG" id="KOG1603">
    <property type="taxonomic scope" value="Eukaryota"/>
</dbReference>
<dbReference type="HOGENOM" id="CLU_041066_0_0_1"/>
<dbReference type="InParanoid" id="A2RVM8"/>
<dbReference type="PRO" id="PR:A2RVM8"/>
<dbReference type="Proteomes" id="UP000006548">
    <property type="component" value="Chromosome 1"/>
</dbReference>
<dbReference type="ExpressionAtlas" id="A2RVM8">
    <property type="expression patterns" value="baseline and differential"/>
</dbReference>
<dbReference type="GO" id="GO:0046872">
    <property type="term" value="F:metal ion binding"/>
    <property type="evidence" value="ECO:0007669"/>
    <property type="project" value="UniProtKB-KW"/>
</dbReference>
<dbReference type="CDD" id="cd00371">
    <property type="entry name" value="HMA"/>
    <property type="match status" value="1"/>
</dbReference>
<dbReference type="Gene3D" id="3.30.70.100">
    <property type="match status" value="1"/>
</dbReference>
<dbReference type="InterPro" id="IPR006121">
    <property type="entry name" value="HMA_dom"/>
</dbReference>
<dbReference type="InterPro" id="IPR036163">
    <property type="entry name" value="HMA_dom_sf"/>
</dbReference>
<dbReference type="PANTHER" id="PTHR45868">
    <property type="entry name" value="HEAVY METAL-ASSOCIATED ISOPRENYLATED PLANT PROTEIN 33-RELATED"/>
    <property type="match status" value="1"/>
</dbReference>
<dbReference type="PANTHER" id="PTHR45868:SF19">
    <property type="entry name" value="HEAVY METAL-ASSOCIATED ISOPRENYLATED PLANT PROTEIN 37"/>
    <property type="match status" value="1"/>
</dbReference>
<dbReference type="Pfam" id="PF00403">
    <property type="entry name" value="HMA"/>
    <property type="match status" value="1"/>
</dbReference>
<dbReference type="SUPFAM" id="SSF55008">
    <property type="entry name" value="HMA, heavy metal-associated domain"/>
    <property type="match status" value="1"/>
</dbReference>
<dbReference type="PROSITE" id="PS50846">
    <property type="entry name" value="HMA_2"/>
    <property type="match status" value="1"/>
</dbReference>
<gene>
    <name evidence="5 6" type="primary">HIPP37</name>
    <name evidence="8" type="ordered locus">At1g23000</name>
    <name evidence="9" type="ORF">F19G10.6</name>
</gene>
<comment type="function">
    <text evidence="1">Heavy-metal-binding protein.</text>
</comment>
<comment type="similarity">
    <text evidence="7">Belongs to the HIPP family.</text>
</comment>
<comment type="sequence caution" evidence="7">
    <conflict type="erroneous gene model prediction">
        <sequence resource="EMBL-CDS" id="AAB72166"/>
    </conflict>
</comment>
<comment type="sequence caution" evidence="7">
    <conflict type="erroneous initiation">
        <sequence resource="EMBL-CDS" id="BAC42327"/>
    </conflict>
    <text>Truncated N-terminus.</text>
</comment>
<keyword id="KW-0449">Lipoprotein</keyword>
<keyword id="KW-0479">Metal-binding</keyword>
<keyword id="KW-0488">Methylation</keyword>
<keyword id="KW-0636">Prenylation</keyword>
<keyword id="KW-1185">Reference proteome</keyword>
<protein>
    <recommendedName>
        <fullName evidence="5 6">Heavy metal-associated isoprenylated plant protein 37</fullName>
        <shortName evidence="5 6">AtHIP37</shortName>
    </recommendedName>
</protein>
<feature type="chain" id="PRO_0000437851" description="Heavy metal-associated isoprenylated plant protein 37">
    <location>
        <begin position="1"/>
        <end position="355"/>
    </location>
</feature>
<feature type="propeptide" id="PRO_0000437852" description="Removed in mature form" evidence="7">
    <location>
        <begin position="356"/>
        <end position="358"/>
    </location>
</feature>
<feature type="domain" description="HMA" evidence="3">
    <location>
        <begin position="12"/>
        <end position="75"/>
    </location>
</feature>
<feature type="region of interest" description="Disordered" evidence="4">
    <location>
        <begin position="100"/>
        <end position="194"/>
    </location>
</feature>
<feature type="region of interest" description="Disordered" evidence="4">
    <location>
        <begin position="332"/>
        <end position="358"/>
    </location>
</feature>
<feature type="compositionally biased region" description="Acidic residues" evidence="4">
    <location>
        <begin position="128"/>
        <end position="141"/>
    </location>
</feature>
<feature type="compositionally biased region" description="Low complexity" evidence="4">
    <location>
        <begin position="148"/>
        <end position="181"/>
    </location>
</feature>
<feature type="compositionally biased region" description="Polar residues" evidence="4">
    <location>
        <begin position="184"/>
        <end position="194"/>
    </location>
</feature>
<feature type="compositionally biased region" description="Polar residues" evidence="4">
    <location>
        <begin position="339"/>
        <end position="358"/>
    </location>
</feature>
<feature type="binding site" evidence="3">
    <location>
        <position position="23"/>
    </location>
    <ligand>
        <name>a metal cation</name>
        <dbReference type="ChEBI" id="CHEBI:25213"/>
    </ligand>
</feature>
<feature type="binding site" evidence="3">
    <location>
        <position position="26"/>
    </location>
    <ligand>
        <name>a metal cation</name>
        <dbReference type="ChEBI" id="CHEBI:25213"/>
    </ligand>
</feature>
<feature type="modified residue" description="Cysteine methyl ester" evidence="2">
    <location>
        <position position="355"/>
    </location>
</feature>
<feature type="lipid moiety-binding region" description="S-farnesyl cysteine" evidence="2">
    <location>
        <position position="355"/>
    </location>
</feature>
<accession>A2RVM8</accession>
<accession>O23124</accession>
<accession>Q8GYF2</accession>
<evidence type="ECO:0000250" key="1">
    <source>
        <dbReference type="UniProtKB" id="Q9LZF1"/>
    </source>
</evidence>
<evidence type="ECO:0000250" key="2">
    <source>
        <dbReference type="UniProtKB" id="Q9SZN7"/>
    </source>
</evidence>
<evidence type="ECO:0000255" key="3">
    <source>
        <dbReference type="PROSITE-ProRule" id="PRU00280"/>
    </source>
</evidence>
<evidence type="ECO:0000256" key="4">
    <source>
        <dbReference type="SAM" id="MobiDB-lite"/>
    </source>
</evidence>
<evidence type="ECO:0000303" key="5">
    <source>
    </source>
</evidence>
<evidence type="ECO:0000303" key="6">
    <source>
    </source>
</evidence>
<evidence type="ECO:0000305" key="7"/>
<evidence type="ECO:0000312" key="8">
    <source>
        <dbReference type="Araport" id="AT1G23000"/>
    </source>
</evidence>
<evidence type="ECO:0000312" key="9">
    <source>
        <dbReference type="EMBL" id="AAB72166.1"/>
    </source>
</evidence>
<evidence type="ECO:0000312" key="10">
    <source>
        <dbReference type="EMBL" id="ABN04757.1"/>
    </source>
</evidence>
<name>HIP37_ARATH</name>